<dbReference type="EMBL" id="CP000384">
    <property type="protein sequence ID" value="ABG08102.1"/>
    <property type="molecule type" value="Genomic_DNA"/>
</dbReference>
<dbReference type="SMR" id="Q1BAI2"/>
<dbReference type="KEGG" id="mmc:Mmcs_1993"/>
<dbReference type="HOGENOM" id="CLU_040318_2_3_11"/>
<dbReference type="BioCyc" id="MSP164756:G1G6O-2039-MONOMER"/>
<dbReference type="GO" id="GO:0022627">
    <property type="term" value="C:cytosolic small ribosomal subunit"/>
    <property type="evidence" value="ECO:0007669"/>
    <property type="project" value="TreeGrafter"/>
</dbReference>
<dbReference type="GO" id="GO:0003735">
    <property type="term" value="F:structural constituent of ribosome"/>
    <property type="evidence" value="ECO:0007669"/>
    <property type="project" value="InterPro"/>
</dbReference>
<dbReference type="GO" id="GO:0006412">
    <property type="term" value="P:translation"/>
    <property type="evidence" value="ECO:0007669"/>
    <property type="project" value="UniProtKB-UniRule"/>
</dbReference>
<dbReference type="CDD" id="cd01425">
    <property type="entry name" value="RPS2"/>
    <property type="match status" value="1"/>
</dbReference>
<dbReference type="FunFam" id="1.10.287.610:FF:000001">
    <property type="entry name" value="30S ribosomal protein S2"/>
    <property type="match status" value="1"/>
</dbReference>
<dbReference type="Gene3D" id="3.40.50.10490">
    <property type="entry name" value="Glucose-6-phosphate isomerase like protein, domain 1"/>
    <property type="match status" value="1"/>
</dbReference>
<dbReference type="Gene3D" id="1.10.287.610">
    <property type="entry name" value="Helix hairpin bin"/>
    <property type="match status" value="1"/>
</dbReference>
<dbReference type="HAMAP" id="MF_00291_B">
    <property type="entry name" value="Ribosomal_uS2_B"/>
    <property type="match status" value="1"/>
</dbReference>
<dbReference type="InterPro" id="IPR001865">
    <property type="entry name" value="Ribosomal_uS2"/>
</dbReference>
<dbReference type="InterPro" id="IPR005706">
    <property type="entry name" value="Ribosomal_uS2_bac/mit/plastid"/>
</dbReference>
<dbReference type="InterPro" id="IPR018130">
    <property type="entry name" value="Ribosomal_uS2_CS"/>
</dbReference>
<dbReference type="InterPro" id="IPR023591">
    <property type="entry name" value="Ribosomal_uS2_flav_dom_sf"/>
</dbReference>
<dbReference type="NCBIfam" id="TIGR01011">
    <property type="entry name" value="rpsB_bact"/>
    <property type="match status" value="1"/>
</dbReference>
<dbReference type="PANTHER" id="PTHR12534">
    <property type="entry name" value="30S RIBOSOMAL PROTEIN S2 PROKARYOTIC AND ORGANELLAR"/>
    <property type="match status" value="1"/>
</dbReference>
<dbReference type="PANTHER" id="PTHR12534:SF0">
    <property type="entry name" value="SMALL RIBOSOMAL SUBUNIT PROTEIN US2M"/>
    <property type="match status" value="1"/>
</dbReference>
<dbReference type="Pfam" id="PF00318">
    <property type="entry name" value="Ribosomal_S2"/>
    <property type="match status" value="1"/>
</dbReference>
<dbReference type="PRINTS" id="PR00395">
    <property type="entry name" value="RIBOSOMALS2"/>
</dbReference>
<dbReference type="SUPFAM" id="SSF52313">
    <property type="entry name" value="Ribosomal protein S2"/>
    <property type="match status" value="1"/>
</dbReference>
<dbReference type="PROSITE" id="PS00962">
    <property type="entry name" value="RIBOSOMAL_S2_1"/>
    <property type="match status" value="1"/>
</dbReference>
<accession>Q1BAI2</accession>
<proteinExistence type="inferred from homology"/>
<reference key="1">
    <citation type="submission" date="2006-06" db="EMBL/GenBank/DDBJ databases">
        <title>Complete sequence of chromosome of Mycobacterium sp. MCS.</title>
        <authorList>
            <consortium name="US DOE Joint Genome Institute"/>
            <person name="Copeland A."/>
            <person name="Lucas S."/>
            <person name="Lapidus A."/>
            <person name="Barry K."/>
            <person name="Detter J.C."/>
            <person name="Glavina del Rio T."/>
            <person name="Hammon N."/>
            <person name="Israni S."/>
            <person name="Dalin E."/>
            <person name="Tice H."/>
            <person name="Pitluck S."/>
            <person name="Martinez M."/>
            <person name="Schmutz J."/>
            <person name="Larimer F."/>
            <person name="Land M."/>
            <person name="Hauser L."/>
            <person name="Kyrpides N."/>
            <person name="Kim E."/>
            <person name="Miller C.D."/>
            <person name="Hughes J.E."/>
            <person name="Anderson A.J."/>
            <person name="Sims R.C."/>
            <person name="Richardson P."/>
        </authorList>
    </citation>
    <scope>NUCLEOTIDE SEQUENCE [LARGE SCALE GENOMIC DNA]</scope>
    <source>
        <strain>MCS</strain>
    </source>
</reference>
<protein>
    <recommendedName>
        <fullName evidence="1">Small ribosomal subunit protein uS2</fullName>
    </recommendedName>
    <alternativeName>
        <fullName evidence="3">30S ribosomal protein S2</fullName>
    </alternativeName>
</protein>
<feature type="chain" id="PRO_1000004002" description="Small ribosomal subunit protein uS2">
    <location>
        <begin position="1"/>
        <end position="284"/>
    </location>
</feature>
<feature type="region of interest" description="Disordered" evidence="2">
    <location>
        <begin position="250"/>
        <end position="284"/>
    </location>
</feature>
<feature type="compositionally biased region" description="Low complexity" evidence="2">
    <location>
        <begin position="250"/>
        <end position="272"/>
    </location>
</feature>
<organism>
    <name type="scientific">Mycobacterium sp. (strain MCS)</name>
    <dbReference type="NCBI Taxonomy" id="164756"/>
    <lineage>
        <taxon>Bacteria</taxon>
        <taxon>Bacillati</taxon>
        <taxon>Actinomycetota</taxon>
        <taxon>Actinomycetes</taxon>
        <taxon>Mycobacteriales</taxon>
        <taxon>Mycobacteriaceae</taxon>
        <taxon>Mycobacterium</taxon>
    </lineage>
</organism>
<gene>
    <name evidence="1" type="primary">rpsB</name>
    <name type="ordered locus">Mmcs_1993</name>
</gene>
<keyword id="KW-0687">Ribonucleoprotein</keyword>
<keyword id="KW-0689">Ribosomal protein</keyword>
<sequence length="284" mass="31078">MAVVTMKQLLDSGTHFGHQTRRWNPKMKRFIFTDRNGIYIIDLQQTLTYIDKAYEFVKETVAHGGSIMFVGTKKQAQESIAEEATRVGMPYVNQRWLGGMLTNFSTVHKRLQRLKELEAMEQTGGFEGRTKKEILMLTREKNKLERSLGGIRDMQKVPSAIWVVDTNKEHLAVAEARKLNIPIIAILDTNCDPDVVDYPIPGNDDAIRSAALLTKVVASAVAEGLQARAGGGNGNKPEAEAAEPLAEWEQELLAGATASPTAAGAAPGTPEADIQTEPTAPQNP</sequence>
<evidence type="ECO:0000255" key="1">
    <source>
        <dbReference type="HAMAP-Rule" id="MF_00291"/>
    </source>
</evidence>
<evidence type="ECO:0000256" key="2">
    <source>
        <dbReference type="SAM" id="MobiDB-lite"/>
    </source>
</evidence>
<evidence type="ECO:0000305" key="3"/>
<name>RS2_MYCSS</name>
<comment type="similarity">
    <text evidence="1">Belongs to the universal ribosomal protein uS2 family.</text>
</comment>